<proteinExistence type="inferred from homology"/>
<name>RL20_SHOC1</name>
<feature type="chain" id="PRO_0000177118" description="Large ribosomal subunit protein bL20">
    <location>
        <begin position="1"/>
        <end position="119"/>
    </location>
</feature>
<reference key="1">
    <citation type="submission" date="2003-10" db="EMBL/GenBank/DDBJ databases">
        <title>The complete genome sequence of the alkaliphilic Bacillus clausii KSM-K16.</title>
        <authorList>
            <person name="Takaki Y."/>
            <person name="Kageyama Y."/>
            <person name="Shimamura S."/>
            <person name="Suzuki H."/>
            <person name="Nishi S."/>
            <person name="Hatada Y."/>
            <person name="Kawai S."/>
            <person name="Ito S."/>
            <person name="Horikoshi K."/>
        </authorList>
    </citation>
    <scope>NUCLEOTIDE SEQUENCE [LARGE SCALE GENOMIC DNA]</scope>
    <source>
        <strain>KSM-K16</strain>
    </source>
</reference>
<dbReference type="EMBL" id="AP006627">
    <property type="protein sequence ID" value="BAD65222.1"/>
    <property type="molecule type" value="Genomic_DNA"/>
</dbReference>
<dbReference type="RefSeq" id="WP_011247530.1">
    <property type="nucleotide sequence ID" value="NC_006582.1"/>
</dbReference>
<dbReference type="SMR" id="Q5WEI8"/>
<dbReference type="STRING" id="66692.ABC2687"/>
<dbReference type="GeneID" id="86926931"/>
<dbReference type="KEGG" id="bcl:ABC2687"/>
<dbReference type="eggNOG" id="COG0292">
    <property type="taxonomic scope" value="Bacteria"/>
</dbReference>
<dbReference type="HOGENOM" id="CLU_123265_0_1_9"/>
<dbReference type="OrthoDB" id="9808966at2"/>
<dbReference type="Proteomes" id="UP000001168">
    <property type="component" value="Chromosome"/>
</dbReference>
<dbReference type="GO" id="GO:1990904">
    <property type="term" value="C:ribonucleoprotein complex"/>
    <property type="evidence" value="ECO:0007669"/>
    <property type="project" value="UniProtKB-KW"/>
</dbReference>
<dbReference type="GO" id="GO:0005840">
    <property type="term" value="C:ribosome"/>
    <property type="evidence" value="ECO:0007669"/>
    <property type="project" value="UniProtKB-KW"/>
</dbReference>
<dbReference type="GO" id="GO:0019843">
    <property type="term" value="F:rRNA binding"/>
    <property type="evidence" value="ECO:0007669"/>
    <property type="project" value="UniProtKB-UniRule"/>
</dbReference>
<dbReference type="GO" id="GO:0003735">
    <property type="term" value="F:structural constituent of ribosome"/>
    <property type="evidence" value="ECO:0007669"/>
    <property type="project" value="InterPro"/>
</dbReference>
<dbReference type="GO" id="GO:0000027">
    <property type="term" value="P:ribosomal large subunit assembly"/>
    <property type="evidence" value="ECO:0007669"/>
    <property type="project" value="UniProtKB-UniRule"/>
</dbReference>
<dbReference type="GO" id="GO:0006412">
    <property type="term" value="P:translation"/>
    <property type="evidence" value="ECO:0007669"/>
    <property type="project" value="InterPro"/>
</dbReference>
<dbReference type="CDD" id="cd07026">
    <property type="entry name" value="Ribosomal_L20"/>
    <property type="match status" value="1"/>
</dbReference>
<dbReference type="FunFam" id="1.10.1900.20:FF:000001">
    <property type="entry name" value="50S ribosomal protein L20"/>
    <property type="match status" value="1"/>
</dbReference>
<dbReference type="Gene3D" id="6.10.160.10">
    <property type="match status" value="1"/>
</dbReference>
<dbReference type="Gene3D" id="1.10.1900.20">
    <property type="entry name" value="Ribosomal protein L20"/>
    <property type="match status" value="1"/>
</dbReference>
<dbReference type="HAMAP" id="MF_00382">
    <property type="entry name" value="Ribosomal_bL20"/>
    <property type="match status" value="1"/>
</dbReference>
<dbReference type="InterPro" id="IPR005813">
    <property type="entry name" value="Ribosomal_bL20"/>
</dbReference>
<dbReference type="InterPro" id="IPR049946">
    <property type="entry name" value="RIBOSOMAL_L20_CS"/>
</dbReference>
<dbReference type="InterPro" id="IPR035566">
    <property type="entry name" value="Ribosomal_protein_bL20_C"/>
</dbReference>
<dbReference type="NCBIfam" id="TIGR01032">
    <property type="entry name" value="rplT_bact"/>
    <property type="match status" value="1"/>
</dbReference>
<dbReference type="PANTHER" id="PTHR10986">
    <property type="entry name" value="39S RIBOSOMAL PROTEIN L20"/>
    <property type="match status" value="1"/>
</dbReference>
<dbReference type="Pfam" id="PF00453">
    <property type="entry name" value="Ribosomal_L20"/>
    <property type="match status" value="1"/>
</dbReference>
<dbReference type="PRINTS" id="PR00062">
    <property type="entry name" value="RIBOSOMALL20"/>
</dbReference>
<dbReference type="SUPFAM" id="SSF74731">
    <property type="entry name" value="Ribosomal protein L20"/>
    <property type="match status" value="1"/>
</dbReference>
<dbReference type="PROSITE" id="PS00937">
    <property type="entry name" value="RIBOSOMAL_L20"/>
    <property type="match status" value="1"/>
</dbReference>
<accession>Q5WEI8</accession>
<sequence>MPRVKGGYVARRRRKKVLKLAKGYYGSKHTLFKSAQGQVMKSLQYAYRDRRQKKRDFRKLWITRINAAARLNGLSYSRLMHGLKLAEINVNRKMLADLAVNDEKAFAQLADKAKESLNS</sequence>
<protein>
    <recommendedName>
        <fullName evidence="1">Large ribosomal subunit protein bL20</fullName>
    </recommendedName>
    <alternativeName>
        <fullName evidence="2">50S ribosomal protein L20</fullName>
    </alternativeName>
</protein>
<evidence type="ECO:0000255" key="1">
    <source>
        <dbReference type="HAMAP-Rule" id="MF_00382"/>
    </source>
</evidence>
<evidence type="ECO:0000305" key="2"/>
<keyword id="KW-1185">Reference proteome</keyword>
<keyword id="KW-0687">Ribonucleoprotein</keyword>
<keyword id="KW-0689">Ribosomal protein</keyword>
<keyword id="KW-0694">RNA-binding</keyword>
<keyword id="KW-0699">rRNA-binding</keyword>
<gene>
    <name evidence="1" type="primary">rplT</name>
    <name type="ordered locus">ABC2687</name>
</gene>
<organism>
    <name type="scientific">Shouchella clausii (strain KSM-K16)</name>
    <name type="common">Alkalihalobacillus clausii</name>
    <dbReference type="NCBI Taxonomy" id="66692"/>
    <lineage>
        <taxon>Bacteria</taxon>
        <taxon>Bacillati</taxon>
        <taxon>Bacillota</taxon>
        <taxon>Bacilli</taxon>
        <taxon>Bacillales</taxon>
        <taxon>Bacillaceae</taxon>
        <taxon>Shouchella</taxon>
    </lineage>
</organism>
<comment type="function">
    <text evidence="1">Binds directly to 23S ribosomal RNA and is necessary for the in vitro assembly process of the 50S ribosomal subunit. It is not involved in the protein synthesizing functions of that subunit.</text>
</comment>
<comment type="similarity">
    <text evidence="1">Belongs to the bacterial ribosomal protein bL20 family.</text>
</comment>